<evidence type="ECO:0000250" key="1">
    <source>
        <dbReference type="UniProtKB" id="O08970"/>
    </source>
</evidence>
<evidence type="ECO:0000250" key="2">
    <source>
        <dbReference type="UniProtKB" id="P27628"/>
    </source>
</evidence>
<evidence type="ECO:0000255" key="3"/>
<evidence type="ECO:0000256" key="4">
    <source>
        <dbReference type="SAM" id="MobiDB-lite"/>
    </source>
</evidence>
<evidence type="ECO:0000269" key="5">
    <source>
    </source>
</evidence>
<evidence type="ECO:0000269" key="6">
    <source>
    </source>
</evidence>
<evidence type="ECO:0000303" key="7">
    <source>
    </source>
</evidence>
<evidence type="ECO:0000303" key="8">
    <source>
    </source>
</evidence>
<evidence type="ECO:0000303" key="9">
    <source>
    </source>
</evidence>
<evidence type="ECO:0000305" key="10"/>
<sequence>MNGTRNWCTLVDVHPEDQAAGSVDILRLTLQGELTGDELEHIAQKAGRKTYAMVSSHSAGHSLASELVESHDGHEEIIKVYLKGRSGDKMIHEKNINQLKSEVQYIQEARNCLQKLREDISSKLDRNLGDSLHRQEIQVVLEKPNGFSQSPTALYSSPPEVDTCINEDVESLRKTVQDLLAKLQEAKRQHQSDCVAFEVTLSRYQREAEQSNVALQREEDRVEQKEAEVGELQRRLLGMETEHQALLAKVREGEVALEELRSNNADCQAEREKAATLEKEVAGLREKIHHLDDMLKSQQRKVRQMIEQLQNSKAVIQSKDATIQELKEKIAYLEAENLEMHDRMEHLIEKQISHGNFSTQARAKTENPGSIRISKPPSPKPMPVIRVVET</sequence>
<reference key="1">
    <citation type="journal article" date="2001" name="Gene">
        <title>The human tuftelin gene: cloning and characterization.</title>
        <authorList>
            <person name="Mao Z."/>
            <person name="Shay B."/>
            <person name="Hekmati M."/>
            <person name="Fermon E."/>
            <person name="Taylor A."/>
            <person name="Dafni L."/>
            <person name="Heikinheimo K."/>
            <person name="Lustmann J."/>
            <person name="Fisher L.W."/>
            <person name="Young M.F."/>
            <person name="Deutsch D."/>
        </authorList>
    </citation>
    <scope>NUCLEOTIDE SEQUENCE [GENOMIC DNA / MRNA] (ISOFORMS 1; 2 AND 3)</scope>
</reference>
<reference key="2">
    <citation type="journal article" date="2001" name="Genome Res.">
        <title>Towards a catalog of human genes and proteins: sequencing and analysis of 500 novel complete protein coding human cDNAs.</title>
        <authorList>
            <person name="Wiemann S."/>
            <person name="Weil B."/>
            <person name="Wellenreuther R."/>
            <person name="Gassenhuber J."/>
            <person name="Glassl S."/>
            <person name="Ansorge W."/>
            <person name="Boecher M."/>
            <person name="Bloecker H."/>
            <person name="Bauersachs S."/>
            <person name="Blum H."/>
            <person name="Lauber J."/>
            <person name="Duesterhoeft A."/>
            <person name="Beyer A."/>
            <person name="Koehrer K."/>
            <person name="Strack N."/>
            <person name="Mewes H.-W."/>
            <person name="Ottenwaelder B."/>
            <person name="Obermaier B."/>
            <person name="Tampe J."/>
            <person name="Heubner D."/>
            <person name="Wambutt R."/>
            <person name="Korn B."/>
            <person name="Klein M."/>
            <person name="Poustka A."/>
        </authorList>
    </citation>
    <scope>NUCLEOTIDE SEQUENCE [LARGE SCALE MRNA] (ISOFORM 1)</scope>
    <source>
        <tissue>Uterus</tissue>
    </source>
</reference>
<reference key="3">
    <citation type="journal article" date="2004" name="Nat. Genet.">
        <title>Complete sequencing and characterization of 21,243 full-length human cDNAs.</title>
        <authorList>
            <person name="Ota T."/>
            <person name="Suzuki Y."/>
            <person name="Nishikawa T."/>
            <person name="Otsuki T."/>
            <person name="Sugiyama T."/>
            <person name="Irie R."/>
            <person name="Wakamatsu A."/>
            <person name="Hayashi K."/>
            <person name="Sato H."/>
            <person name="Nagai K."/>
            <person name="Kimura K."/>
            <person name="Makita H."/>
            <person name="Sekine M."/>
            <person name="Obayashi M."/>
            <person name="Nishi T."/>
            <person name="Shibahara T."/>
            <person name="Tanaka T."/>
            <person name="Ishii S."/>
            <person name="Yamamoto J."/>
            <person name="Saito K."/>
            <person name="Kawai Y."/>
            <person name="Isono Y."/>
            <person name="Nakamura Y."/>
            <person name="Nagahari K."/>
            <person name="Murakami K."/>
            <person name="Yasuda T."/>
            <person name="Iwayanagi T."/>
            <person name="Wagatsuma M."/>
            <person name="Shiratori A."/>
            <person name="Sudo H."/>
            <person name="Hosoiri T."/>
            <person name="Kaku Y."/>
            <person name="Kodaira H."/>
            <person name="Kondo H."/>
            <person name="Sugawara M."/>
            <person name="Takahashi M."/>
            <person name="Kanda K."/>
            <person name="Yokoi T."/>
            <person name="Furuya T."/>
            <person name="Kikkawa E."/>
            <person name="Omura Y."/>
            <person name="Abe K."/>
            <person name="Kamihara K."/>
            <person name="Katsuta N."/>
            <person name="Sato K."/>
            <person name="Tanikawa M."/>
            <person name="Yamazaki M."/>
            <person name="Ninomiya K."/>
            <person name="Ishibashi T."/>
            <person name="Yamashita H."/>
            <person name="Murakawa K."/>
            <person name="Fujimori K."/>
            <person name="Tanai H."/>
            <person name="Kimata M."/>
            <person name="Watanabe M."/>
            <person name="Hiraoka S."/>
            <person name="Chiba Y."/>
            <person name="Ishida S."/>
            <person name="Ono Y."/>
            <person name="Takiguchi S."/>
            <person name="Watanabe S."/>
            <person name="Yosida M."/>
            <person name="Hotuta T."/>
            <person name="Kusano J."/>
            <person name="Kanehori K."/>
            <person name="Takahashi-Fujii A."/>
            <person name="Hara H."/>
            <person name="Tanase T.-O."/>
            <person name="Nomura Y."/>
            <person name="Togiya S."/>
            <person name="Komai F."/>
            <person name="Hara R."/>
            <person name="Takeuchi K."/>
            <person name="Arita M."/>
            <person name="Imose N."/>
            <person name="Musashino K."/>
            <person name="Yuuki H."/>
            <person name="Oshima A."/>
            <person name="Sasaki N."/>
            <person name="Aotsuka S."/>
            <person name="Yoshikawa Y."/>
            <person name="Matsunawa H."/>
            <person name="Ichihara T."/>
            <person name="Shiohata N."/>
            <person name="Sano S."/>
            <person name="Moriya S."/>
            <person name="Momiyama H."/>
            <person name="Satoh N."/>
            <person name="Takami S."/>
            <person name="Terashima Y."/>
            <person name="Suzuki O."/>
            <person name="Nakagawa S."/>
            <person name="Senoh A."/>
            <person name="Mizoguchi H."/>
            <person name="Goto Y."/>
            <person name="Shimizu F."/>
            <person name="Wakebe H."/>
            <person name="Hishigaki H."/>
            <person name="Watanabe T."/>
            <person name="Sugiyama A."/>
            <person name="Takemoto M."/>
            <person name="Kawakami B."/>
            <person name="Yamazaki M."/>
            <person name="Watanabe K."/>
            <person name="Kumagai A."/>
            <person name="Itakura S."/>
            <person name="Fukuzumi Y."/>
            <person name="Fujimori Y."/>
            <person name="Komiyama M."/>
            <person name="Tashiro H."/>
            <person name="Tanigami A."/>
            <person name="Fujiwara T."/>
            <person name="Ono T."/>
            <person name="Yamada K."/>
            <person name="Fujii Y."/>
            <person name="Ozaki K."/>
            <person name="Hirao M."/>
            <person name="Ohmori Y."/>
            <person name="Kawabata A."/>
            <person name="Hikiji T."/>
            <person name="Kobatake N."/>
            <person name="Inagaki H."/>
            <person name="Ikema Y."/>
            <person name="Okamoto S."/>
            <person name="Okitani R."/>
            <person name="Kawakami T."/>
            <person name="Noguchi S."/>
            <person name="Itoh T."/>
            <person name="Shigeta K."/>
            <person name="Senba T."/>
            <person name="Matsumura K."/>
            <person name="Nakajima Y."/>
            <person name="Mizuno T."/>
            <person name="Morinaga M."/>
            <person name="Sasaki M."/>
            <person name="Togashi T."/>
            <person name="Oyama M."/>
            <person name="Hata H."/>
            <person name="Watanabe M."/>
            <person name="Komatsu T."/>
            <person name="Mizushima-Sugano J."/>
            <person name="Satoh T."/>
            <person name="Shirai Y."/>
            <person name="Takahashi Y."/>
            <person name="Nakagawa K."/>
            <person name="Okumura K."/>
            <person name="Nagase T."/>
            <person name="Nomura N."/>
            <person name="Kikuchi H."/>
            <person name="Masuho Y."/>
            <person name="Yamashita R."/>
            <person name="Nakai K."/>
            <person name="Yada T."/>
            <person name="Nakamura Y."/>
            <person name="Ohara O."/>
            <person name="Isogai T."/>
            <person name="Sugano S."/>
        </authorList>
    </citation>
    <scope>NUCLEOTIDE SEQUENCE [LARGE SCALE MRNA] (ISOFORMS 1 AND 2)</scope>
    <source>
        <tissue>Hepatoma</tissue>
        <tissue>Tongue</tissue>
    </source>
</reference>
<reference key="4">
    <citation type="journal article" date="2006" name="Nature">
        <title>The DNA sequence and biological annotation of human chromosome 1.</title>
        <authorList>
            <person name="Gregory S.G."/>
            <person name="Barlow K.F."/>
            <person name="McLay K.E."/>
            <person name="Kaul R."/>
            <person name="Swarbreck D."/>
            <person name="Dunham A."/>
            <person name="Scott C.E."/>
            <person name="Howe K.L."/>
            <person name="Woodfine K."/>
            <person name="Spencer C.C.A."/>
            <person name="Jones M.C."/>
            <person name="Gillson C."/>
            <person name="Searle S."/>
            <person name="Zhou Y."/>
            <person name="Kokocinski F."/>
            <person name="McDonald L."/>
            <person name="Evans R."/>
            <person name="Phillips K."/>
            <person name="Atkinson A."/>
            <person name="Cooper R."/>
            <person name="Jones C."/>
            <person name="Hall R.E."/>
            <person name="Andrews T.D."/>
            <person name="Lloyd C."/>
            <person name="Ainscough R."/>
            <person name="Almeida J.P."/>
            <person name="Ambrose K.D."/>
            <person name="Anderson F."/>
            <person name="Andrew R.W."/>
            <person name="Ashwell R.I.S."/>
            <person name="Aubin K."/>
            <person name="Babbage A.K."/>
            <person name="Bagguley C.L."/>
            <person name="Bailey J."/>
            <person name="Beasley H."/>
            <person name="Bethel G."/>
            <person name="Bird C.P."/>
            <person name="Bray-Allen S."/>
            <person name="Brown J.Y."/>
            <person name="Brown A.J."/>
            <person name="Buckley D."/>
            <person name="Burton J."/>
            <person name="Bye J."/>
            <person name="Carder C."/>
            <person name="Chapman J.C."/>
            <person name="Clark S.Y."/>
            <person name="Clarke G."/>
            <person name="Clee C."/>
            <person name="Cobley V."/>
            <person name="Collier R.E."/>
            <person name="Corby N."/>
            <person name="Coville G.J."/>
            <person name="Davies J."/>
            <person name="Deadman R."/>
            <person name="Dunn M."/>
            <person name="Earthrowl M."/>
            <person name="Ellington A.G."/>
            <person name="Errington H."/>
            <person name="Frankish A."/>
            <person name="Frankland J."/>
            <person name="French L."/>
            <person name="Garner P."/>
            <person name="Garnett J."/>
            <person name="Gay L."/>
            <person name="Ghori M.R.J."/>
            <person name="Gibson R."/>
            <person name="Gilby L.M."/>
            <person name="Gillett W."/>
            <person name="Glithero R.J."/>
            <person name="Grafham D.V."/>
            <person name="Griffiths C."/>
            <person name="Griffiths-Jones S."/>
            <person name="Grocock R."/>
            <person name="Hammond S."/>
            <person name="Harrison E.S.I."/>
            <person name="Hart E."/>
            <person name="Haugen E."/>
            <person name="Heath P.D."/>
            <person name="Holmes S."/>
            <person name="Holt K."/>
            <person name="Howden P.J."/>
            <person name="Hunt A.R."/>
            <person name="Hunt S.E."/>
            <person name="Hunter G."/>
            <person name="Isherwood J."/>
            <person name="James R."/>
            <person name="Johnson C."/>
            <person name="Johnson D."/>
            <person name="Joy A."/>
            <person name="Kay M."/>
            <person name="Kershaw J.K."/>
            <person name="Kibukawa M."/>
            <person name="Kimberley A.M."/>
            <person name="King A."/>
            <person name="Knights A.J."/>
            <person name="Lad H."/>
            <person name="Laird G."/>
            <person name="Lawlor S."/>
            <person name="Leongamornlert D.A."/>
            <person name="Lloyd D.M."/>
            <person name="Loveland J."/>
            <person name="Lovell J."/>
            <person name="Lush M.J."/>
            <person name="Lyne R."/>
            <person name="Martin S."/>
            <person name="Mashreghi-Mohammadi M."/>
            <person name="Matthews L."/>
            <person name="Matthews N.S.W."/>
            <person name="McLaren S."/>
            <person name="Milne S."/>
            <person name="Mistry S."/>
            <person name="Moore M.J.F."/>
            <person name="Nickerson T."/>
            <person name="O'Dell C.N."/>
            <person name="Oliver K."/>
            <person name="Palmeiri A."/>
            <person name="Palmer S.A."/>
            <person name="Parker A."/>
            <person name="Patel D."/>
            <person name="Pearce A.V."/>
            <person name="Peck A.I."/>
            <person name="Pelan S."/>
            <person name="Phelps K."/>
            <person name="Phillimore B.J."/>
            <person name="Plumb R."/>
            <person name="Rajan J."/>
            <person name="Raymond C."/>
            <person name="Rouse G."/>
            <person name="Saenphimmachak C."/>
            <person name="Sehra H.K."/>
            <person name="Sheridan E."/>
            <person name="Shownkeen R."/>
            <person name="Sims S."/>
            <person name="Skuce C.D."/>
            <person name="Smith M."/>
            <person name="Steward C."/>
            <person name="Subramanian S."/>
            <person name="Sycamore N."/>
            <person name="Tracey A."/>
            <person name="Tromans A."/>
            <person name="Van Helmond Z."/>
            <person name="Wall M."/>
            <person name="Wallis J.M."/>
            <person name="White S."/>
            <person name="Whitehead S.L."/>
            <person name="Wilkinson J.E."/>
            <person name="Willey D.L."/>
            <person name="Williams H."/>
            <person name="Wilming L."/>
            <person name="Wray P.W."/>
            <person name="Wu Z."/>
            <person name="Coulson A."/>
            <person name="Vaudin M."/>
            <person name="Sulston J.E."/>
            <person name="Durbin R.M."/>
            <person name="Hubbard T."/>
            <person name="Wooster R."/>
            <person name="Dunham I."/>
            <person name="Carter N.P."/>
            <person name="McVean G."/>
            <person name="Ross M.T."/>
            <person name="Harrow J."/>
            <person name="Olson M.V."/>
            <person name="Beck S."/>
            <person name="Rogers J."/>
            <person name="Bentley D.R."/>
        </authorList>
    </citation>
    <scope>NUCLEOTIDE SEQUENCE [LARGE SCALE GENOMIC DNA]</scope>
</reference>
<reference key="5">
    <citation type="submission" date="2005-09" db="EMBL/GenBank/DDBJ databases">
        <authorList>
            <person name="Mural R.J."/>
            <person name="Istrail S."/>
            <person name="Sutton G.G."/>
            <person name="Florea L."/>
            <person name="Halpern A.L."/>
            <person name="Mobarry C.M."/>
            <person name="Lippert R."/>
            <person name="Walenz B."/>
            <person name="Shatkay H."/>
            <person name="Dew I."/>
            <person name="Miller J.R."/>
            <person name="Flanigan M.J."/>
            <person name="Edwards N.J."/>
            <person name="Bolanos R."/>
            <person name="Fasulo D."/>
            <person name="Halldorsson B.V."/>
            <person name="Hannenhalli S."/>
            <person name="Turner R."/>
            <person name="Yooseph S."/>
            <person name="Lu F."/>
            <person name="Nusskern D.R."/>
            <person name="Shue B.C."/>
            <person name="Zheng X.H."/>
            <person name="Zhong F."/>
            <person name="Delcher A.L."/>
            <person name="Huson D.H."/>
            <person name="Kravitz S.A."/>
            <person name="Mouchard L."/>
            <person name="Reinert K."/>
            <person name="Remington K.A."/>
            <person name="Clark A.G."/>
            <person name="Waterman M.S."/>
            <person name="Eichler E.E."/>
            <person name="Adams M.D."/>
            <person name="Hunkapiller M.W."/>
            <person name="Myers E.W."/>
            <person name="Venter J.C."/>
        </authorList>
    </citation>
    <scope>NUCLEOTIDE SEQUENCE [LARGE SCALE GENOMIC DNA]</scope>
</reference>
<reference key="6">
    <citation type="journal article" date="2004" name="Genome Res.">
        <title>The status, quality, and expansion of the NIH full-length cDNA project: the Mammalian Gene Collection (MGC).</title>
        <authorList>
            <consortium name="The MGC Project Team"/>
        </authorList>
    </citation>
    <scope>NUCLEOTIDE SEQUENCE [LARGE SCALE MRNA] (ISOFORMS 1 AND 2)</scope>
    <source>
        <tissue>Kidney</tissue>
        <tissue>Placenta</tissue>
    </source>
</reference>
<reference key="7">
    <citation type="journal article" date="1994" name="Mamm. Genome">
        <title>Mapping of the human tuftelin (TUFT1) gene to chromosome 1 by fluorescence in situ hybridization.</title>
        <authorList>
            <person name="Deutsch D."/>
            <person name="Palmon A."/>
            <person name="Young M.F."/>
            <person name="Selig S."/>
            <person name="Kearns W.G."/>
            <person name="Fisher L.W."/>
        </authorList>
    </citation>
    <scope>PARTIAL NUCLEOTIDE SEQUENCE [GENOMIC DNA]</scope>
</reference>
<reference key="8">
    <citation type="journal article" date="1991" name="J. Biol. Chem.">
        <title>Sequencing of bovine enamelin ('tuftelin') a novel acidic enamel protein.</title>
        <authorList>
            <person name="Deutsch D."/>
            <person name="Palmon A."/>
            <person name="Fisher L.W."/>
            <person name="Kolodny N."/>
            <person name="Termine J.D."/>
            <person name="Young M.F."/>
        </authorList>
    </citation>
    <scope>TISSUE SPECIFICITY</scope>
</reference>
<reference key="9">
    <citation type="journal article" date="2023" name="Br. J. Dermatol.">
        <title>Biallelic TUFT1 variants cause woolly hair, superficial skin fragility and desmosomal defects.</title>
        <authorList>
            <consortium name="Genomics England Research Consortium"/>
            <person name="Jackson A."/>
            <person name="Moss C."/>
            <person name="Chandler K.E."/>
            <person name="Balboa P.L."/>
            <person name="Bageta M.L."/>
            <person name="Petrof G."/>
            <person name="Martinez A.E."/>
            <person name="Liu L."/>
            <person name="Guy A."/>
            <person name="Mellerio J.E."/>
            <person name="Lee J.Y.W."/>
            <person name="Ogboli M."/>
            <person name="Ryan G."/>
            <person name="McGrath J.A."/>
            <person name="Banka S."/>
        </authorList>
    </citation>
    <scope>FUNCTION</scope>
    <scope>TISSUE SPECIFICITY</scope>
    <scope>INVOLVEMENT IN WHSF</scope>
</reference>
<gene>
    <name type="primary">TUFT1</name>
</gene>
<dbReference type="EMBL" id="AF254860">
    <property type="protein sequence ID" value="AAF78914.1"/>
    <property type="molecule type" value="Genomic_DNA"/>
</dbReference>
<dbReference type="EMBL" id="AF254850">
    <property type="protein sequence ID" value="AAF78914.1"/>
    <property type="status" value="JOINED"/>
    <property type="molecule type" value="Genomic_DNA"/>
</dbReference>
<dbReference type="EMBL" id="AF254851">
    <property type="protein sequence ID" value="AAF78914.1"/>
    <property type="status" value="JOINED"/>
    <property type="molecule type" value="Genomic_DNA"/>
</dbReference>
<dbReference type="EMBL" id="AF254852">
    <property type="protein sequence ID" value="AAF78914.1"/>
    <property type="status" value="JOINED"/>
    <property type="molecule type" value="Genomic_DNA"/>
</dbReference>
<dbReference type="EMBL" id="AF254854">
    <property type="protein sequence ID" value="AAF78914.1"/>
    <property type="status" value="JOINED"/>
    <property type="molecule type" value="Genomic_DNA"/>
</dbReference>
<dbReference type="EMBL" id="AF254855">
    <property type="protein sequence ID" value="AAF78914.1"/>
    <property type="status" value="JOINED"/>
    <property type="molecule type" value="Genomic_DNA"/>
</dbReference>
<dbReference type="EMBL" id="AF254856">
    <property type="protein sequence ID" value="AAF78914.1"/>
    <property type="status" value="JOINED"/>
    <property type="molecule type" value="Genomic_DNA"/>
</dbReference>
<dbReference type="EMBL" id="AF254857">
    <property type="protein sequence ID" value="AAF78914.1"/>
    <property type="status" value="JOINED"/>
    <property type="molecule type" value="Genomic_DNA"/>
</dbReference>
<dbReference type="EMBL" id="AF254858">
    <property type="protein sequence ID" value="AAF78914.1"/>
    <property type="status" value="JOINED"/>
    <property type="molecule type" value="Genomic_DNA"/>
</dbReference>
<dbReference type="EMBL" id="AF254859">
    <property type="protein sequence ID" value="AAF78914.1"/>
    <property type="status" value="JOINED"/>
    <property type="molecule type" value="Genomic_DNA"/>
</dbReference>
<dbReference type="EMBL" id="AF254260">
    <property type="protein sequence ID" value="AAF78913.1"/>
    <property type="molecule type" value="mRNA"/>
</dbReference>
<dbReference type="EMBL" id="AL136917">
    <property type="protein sequence ID" value="CAB66851.1"/>
    <property type="molecule type" value="mRNA"/>
</dbReference>
<dbReference type="EMBL" id="AK026989">
    <property type="protein sequence ID" value="BAB15615.1"/>
    <property type="status" value="ALT_INIT"/>
    <property type="molecule type" value="mRNA"/>
</dbReference>
<dbReference type="EMBL" id="AK075001">
    <property type="protein sequence ID" value="BAC11346.1"/>
    <property type="molecule type" value="mRNA"/>
</dbReference>
<dbReference type="EMBL" id="AK315414">
    <property type="protein sequence ID" value="BAG37804.1"/>
    <property type="molecule type" value="mRNA"/>
</dbReference>
<dbReference type="EMBL" id="AL365436">
    <property type="status" value="NOT_ANNOTATED_CDS"/>
    <property type="molecule type" value="Genomic_DNA"/>
</dbReference>
<dbReference type="EMBL" id="CH471121">
    <property type="protein sequence ID" value="EAW53429.1"/>
    <property type="molecule type" value="Genomic_DNA"/>
</dbReference>
<dbReference type="EMBL" id="CH471121">
    <property type="protein sequence ID" value="EAW53430.1"/>
    <property type="molecule type" value="Genomic_DNA"/>
</dbReference>
<dbReference type="EMBL" id="CH471121">
    <property type="protein sequence ID" value="EAW53431.1"/>
    <property type="molecule type" value="Genomic_DNA"/>
</dbReference>
<dbReference type="EMBL" id="CH471121">
    <property type="protein sequence ID" value="EAW53433.1"/>
    <property type="molecule type" value="Genomic_DNA"/>
</dbReference>
<dbReference type="EMBL" id="BC002933">
    <property type="protein sequence ID" value="AAH02933.1"/>
    <property type="molecule type" value="mRNA"/>
</dbReference>
<dbReference type="EMBL" id="BC008301">
    <property type="protein sequence ID" value="AAH08301.1"/>
    <property type="molecule type" value="mRNA"/>
</dbReference>
<dbReference type="CCDS" id="CCDS1000.1">
    <molecule id="Q9NNX1-1"/>
</dbReference>
<dbReference type="CCDS" id="CCDS44223.1">
    <molecule id="Q9NNX1-2"/>
</dbReference>
<dbReference type="RefSeq" id="NP_001119809.1">
    <molecule id="Q9NNX1-2"/>
    <property type="nucleotide sequence ID" value="NM_001126337.2"/>
</dbReference>
<dbReference type="RefSeq" id="NP_001288246.1">
    <property type="nucleotide sequence ID" value="NM_001301317.1"/>
</dbReference>
<dbReference type="RefSeq" id="NP_064512.1">
    <molecule id="Q9NNX1-1"/>
    <property type="nucleotide sequence ID" value="NM_020127.3"/>
</dbReference>
<dbReference type="RefSeq" id="XP_011508263.1">
    <molecule id="Q9NNX1-3"/>
    <property type="nucleotide sequence ID" value="XM_011509961.3"/>
</dbReference>
<dbReference type="RefSeq" id="XP_054194564.1">
    <molecule id="Q9NNX1-3"/>
    <property type="nucleotide sequence ID" value="XM_054338589.1"/>
</dbReference>
<dbReference type="SMR" id="Q9NNX1"/>
<dbReference type="BioGRID" id="113137">
    <property type="interactions" value="65"/>
</dbReference>
<dbReference type="FunCoup" id="Q9NNX1">
    <property type="interactions" value="256"/>
</dbReference>
<dbReference type="IntAct" id="Q9NNX1">
    <property type="interactions" value="24"/>
</dbReference>
<dbReference type="MINT" id="Q9NNX1"/>
<dbReference type="STRING" id="9606.ENSP00000357842"/>
<dbReference type="iPTMnet" id="Q9NNX1"/>
<dbReference type="PhosphoSitePlus" id="Q9NNX1"/>
<dbReference type="BioMuta" id="TUFT1"/>
<dbReference type="DMDM" id="22096213"/>
<dbReference type="jPOST" id="Q9NNX1"/>
<dbReference type="MassIVE" id="Q9NNX1"/>
<dbReference type="PaxDb" id="9606-ENSP00000357842"/>
<dbReference type="PeptideAtlas" id="Q9NNX1"/>
<dbReference type="ProteomicsDB" id="81861">
    <molecule id="Q9NNX1-1"/>
</dbReference>
<dbReference type="ProteomicsDB" id="81862">
    <molecule id="Q9NNX1-2"/>
</dbReference>
<dbReference type="ProteomicsDB" id="81863">
    <molecule id="Q9NNX1-3"/>
</dbReference>
<dbReference type="Pumba" id="Q9NNX1"/>
<dbReference type="Antibodypedia" id="34066">
    <property type="antibodies" value="112 antibodies from 20 providers"/>
</dbReference>
<dbReference type="DNASU" id="7286"/>
<dbReference type="Ensembl" id="ENST00000368848.6">
    <molecule id="Q9NNX1-2"/>
    <property type="protein sequence ID" value="ENSP00000357841.2"/>
    <property type="gene ID" value="ENSG00000143367.17"/>
</dbReference>
<dbReference type="Ensembl" id="ENST00000368849.8">
    <molecule id="Q9NNX1-1"/>
    <property type="protein sequence ID" value="ENSP00000357842.3"/>
    <property type="gene ID" value="ENSG00000143367.17"/>
</dbReference>
<dbReference type="GeneID" id="7286"/>
<dbReference type="KEGG" id="hsa:7286"/>
<dbReference type="MANE-Select" id="ENST00000368849.8">
    <property type="protein sequence ID" value="ENSP00000357842.3"/>
    <property type="RefSeq nucleotide sequence ID" value="NM_020127.3"/>
    <property type="RefSeq protein sequence ID" value="NP_064512.1"/>
</dbReference>
<dbReference type="UCSC" id="uc001eyl.3">
    <molecule id="Q9NNX1-1"/>
    <property type="organism name" value="human"/>
</dbReference>
<dbReference type="AGR" id="HGNC:12422"/>
<dbReference type="CTD" id="7286"/>
<dbReference type="DisGeNET" id="7286"/>
<dbReference type="GeneCards" id="TUFT1"/>
<dbReference type="HGNC" id="HGNC:12422">
    <property type="gene designation" value="TUFT1"/>
</dbReference>
<dbReference type="HPA" id="ENSG00000143367">
    <property type="expression patterns" value="Tissue enhanced (skin)"/>
</dbReference>
<dbReference type="MalaCards" id="TUFT1"/>
<dbReference type="MIM" id="600087">
    <property type="type" value="gene"/>
</dbReference>
<dbReference type="MIM" id="620415">
    <property type="type" value="phenotype"/>
</dbReference>
<dbReference type="neXtProt" id="NX_Q9NNX1"/>
<dbReference type="OpenTargets" id="ENSG00000143367"/>
<dbReference type="PharmGKB" id="PA37084"/>
<dbReference type="VEuPathDB" id="HostDB:ENSG00000143367"/>
<dbReference type="eggNOG" id="ENOG502QW76">
    <property type="taxonomic scope" value="Eukaryota"/>
</dbReference>
<dbReference type="GeneTree" id="ENSGT00950000183065"/>
<dbReference type="InParanoid" id="Q9NNX1"/>
<dbReference type="OMA" id="HMEHFLA"/>
<dbReference type="OrthoDB" id="8944635at2759"/>
<dbReference type="PAN-GO" id="Q9NNX1">
    <property type="GO annotations" value="3 GO annotations based on evolutionary models"/>
</dbReference>
<dbReference type="PhylomeDB" id="Q9NNX1"/>
<dbReference type="TreeFam" id="TF331627"/>
<dbReference type="PathwayCommons" id="Q9NNX1"/>
<dbReference type="SignaLink" id="Q9NNX1"/>
<dbReference type="BioGRID-ORCS" id="7286">
    <property type="hits" value="9 hits in 1158 CRISPR screens"/>
</dbReference>
<dbReference type="ChiTaRS" id="TUFT1">
    <property type="organism name" value="human"/>
</dbReference>
<dbReference type="GeneWiki" id="Tuftelin"/>
<dbReference type="GenomeRNAi" id="7286"/>
<dbReference type="Pharos" id="Q9NNX1">
    <property type="development level" value="Tbio"/>
</dbReference>
<dbReference type="PRO" id="PR:Q9NNX1"/>
<dbReference type="Proteomes" id="UP000005640">
    <property type="component" value="Chromosome 1"/>
</dbReference>
<dbReference type="RNAct" id="Q9NNX1">
    <property type="molecule type" value="protein"/>
</dbReference>
<dbReference type="Bgee" id="ENSG00000143367">
    <property type="expression patterns" value="Expressed in amniotic fluid and 185 other cell types or tissues"/>
</dbReference>
<dbReference type="ExpressionAtlas" id="Q9NNX1">
    <property type="expression patterns" value="baseline and differential"/>
</dbReference>
<dbReference type="GO" id="GO:0005737">
    <property type="term" value="C:cytoplasm"/>
    <property type="evidence" value="ECO:0000314"/>
    <property type="project" value="LIFEdb"/>
</dbReference>
<dbReference type="GO" id="GO:0005576">
    <property type="term" value="C:extracellular region"/>
    <property type="evidence" value="ECO:0000303"/>
    <property type="project" value="UniProtKB"/>
</dbReference>
<dbReference type="GO" id="GO:0031674">
    <property type="term" value="C:I band"/>
    <property type="evidence" value="ECO:0000318"/>
    <property type="project" value="GO_Central"/>
</dbReference>
<dbReference type="GO" id="GO:0005665">
    <property type="term" value="C:RNA polymerase II, core complex"/>
    <property type="evidence" value="ECO:0000318"/>
    <property type="project" value="GO_Central"/>
</dbReference>
<dbReference type="GO" id="GO:0030280">
    <property type="term" value="F:structural constituent of skin epidermis"/>
    <property type="evidence" value="ECO:0000315"/>
    <property type="project" value="UniProtKB"/>
</dbReference>
<dbReference type="GO" id="GO:0030345">
    <property type="term" value="F:structural constituent of tooth enamel"/>
    <property type="evidence" value="ECO:0000303"/>
    <property type="project" value="UniProtKB"/>
</dbReference>
<dbReference type="GO" id="GO:0030282">
    <property type="term" value="P:bone mineralization"/>
    <property type="evidence" value="ECO:0000303"/>
    <property type="project" value="UniProtKB"/>
</dbReference>
<dbReference type="GO" id="GO:0042476">
    <property type="term" value="P:odontogenesis"/>
    <property type="evidence" value="ECO:0000303"/>
    <property type="project" value="UniProtKB"/>
</dbReference>
<dbReference type="InterPro" id="IPR051375">
    <property type="entry name" value="Tuftelin_GRINL1A/MYZAP/CCD68"/>
</dbReference>
<dbReference type="PANTHER" id="PTHR23171">
    <property type="entry name" value="GDOWN1"/>
    <property type="match status" value="1"/>
</dbReference>
<dbReference type="PANTHER" id="PTHR23171:SF4">
    <property type="entry name" value="TUFTELIN"/>
    <property type="match status" value="1"/>
</dbReference>
<proteinExistence type="evidence at protein level"/>
<protein>
    <recommendedName>
        <fullName>Tuftelin</fullName>
    </recommendedName>
</protein>
<accession>Q9NNX1</accession>
<accession>B2RD57</accession>
<accession>D3DV21</accession>
<accession>D3DV22</accession>
<accession>Q5T384</accession>
<accession>Q5T385</accession>
<accession>Q9BU28</accession>
<accession>Q9H5L1</accession>
<comment type="function">
    <text evidence="2 6">Involved in the structural organization of the epidermis (PubMed:36689522). Involved in the mineralization and structural organization of enamel.</text>
</comment>
<comment type="subunit">
    <text evidence="1">Interacts with TFIP11.</text>
</comment>
<comment type="interaction">
    <interactant intactId="EBI-2557363">
        <id>Q9NNX1</id>
    </interactant>
    <interactant intactId="EBI-742887">
        <id>Q8TAP6</id>
        <label>CEP76</label>
    </interactant>
    <organismsDiffer>false</organismsDiffer>
    <experiments>3</experiments>
</comment>
<comment type="interaction">
    <interactant intactId="EBI-2557363">
        <id>Q9NNX1</id>
    </interactant>
    <interactant intactId="EBI-399080">
        <id>Q92993</id>
        <label>KAT5</label>
    </interactant>
    <organismsDiffer>false</organismsDiffer>
    <experiments>3</experiments>
</comment>
<comment type="interaction">
    <interactant intactId="EBI-2557363">
        <id>Q9NNX1</id>
    </interactant>
    <interactant intactId="EBI-739696">
        <id>P25791</id>
        <label>LMO2</label>
    </interactant>
    <organismsDiffer>false</organismsDiffer>
    <experiments>3</experiments>
</comment>
<comment type="interaction">
    <interactant intactId="EBI-2557363">
        <id>Q9NNX1</id>
    </interactant>
    <interactant intactId="EBI-11742507">
        <id>Q8TAP4-4</id>
        <label>LMO3</label>
    </interactant>
    <organismsDiffer>false</organismsDiffer>
    <experiments>3</experiments>
</comment>
<comment type="interaction">
    <interactant intactId="EBI-2557363">
        <id>Q9NNX1</id>
    </interactant>
    <interactant intactId="EBI-719493">
        <id>P14373</id>
        <label>TRIM27</label>
    </interactant>
    <organismsDiffer>false</organismsDiffer>
    <experiments>4</experiments>
</comment>
<comment type="interaction">
    <interactant intactId="EBI-2557363">
        <id>Q9NNX1</id>
    </interactant>
    <interactant intactId="EBI-444225">
        <id>Q15942</id>
        <label>ZYX</label>
    </interactant>
    <organismsDiffer>false</organismsDiffer>
    <experiments>3</experiments>
</comment>
<comment type="subcellular location">
    <subcellularLocation>
        <location evidence="2">Secreted</location>
    </subcellularLocation>
    <text evidence="2">Secreted at a very early stage of enamel formation, concentrated at the dentin-enamel junction and tightly bound to the surface of the growing crystallites.</text>
</comment>
<comment type="alternative products">
    <event type="alternative splicing"/>
    <isoform>
        <id>Q9NNX1-1</id>
        <name>1</name>
        <sequence type="displayed"/>
    </isoform>
    <isoform>
        <id>Q9NNX1-2</id>
        <name>2</name>
        <sequence type="described" ref="VSP_006685"/>
    </isoform>
    <isoform>
        <id>Q9NNX1-3</id>
        <name>3</name>
        <sequence type="described" ref="VSP_006686"/>
    </isoform>
</comment>
<comment type="tissue specificity">
    <text evidence="5 6">Expressed in the epidermis (at protein level) (PubMed:36689522). Present in the extracellular enamel and is mainly associated with the crystal component.</text>
</comment>
<comment type="disease" evidence="6">
    <disease id="DI-06738">
        <name>Woolly hair-skin fragility syndrome</name>
        <acronym>WHSF</acronym>
        <description>An autosomal recessive genodermatosis characterized by woolly hair texture with slow hair growth, and skin fragility present at birth or appearing in the neonatal period. Skin fragility then resolves or only persists as minor skin peeling, predominantly affecting the palms and soles.</description>
        <dbReference type="MIM" id="620415"/>
    </disease>
    <text>The disease is caused by variants affecting the gene represented in this entry.</text>
</comment>
<comment type="similarity">
    <text evidence="10">Belongs to the tuftelin family.</text>
</comment>
<comment type="sequence caution" evidence="10">
    <conflict type="erroneous initiation">
        <sequence resource="EMBL-CDS" id="BAB15615"/>
    </conflict>
    <text>Truncated N-terminus.</text>
</comment>
<feature type="chain" id="PRO_0000183186" description="Tuftelin">
    <location>
        <begin position="1"/>
        <end position="390"/>
    </location>
</feature>
<feature type="region of interest" description="Disordered" evidence="4">
    <location>
        <begin position="358"/>
        <end position="390"/>
    </location>
</feature>
<feature type="coiled-coil region" evidence="3">
    <location>
        <begin position="88"/>
        <end position="126"/>
    </location>
</feature>
<feature type="coiled-coil region" evidence="3">
    <location>
        <begin position="162"/>
        <end position="351"/>
    </location>
</feature>
<feature type="splice variant" id="VSP_006686" description="In isoform 3." evidence="7">
    <location>
        <begin position="21"/>
        <end position="79"/>
    </location>
</feature>
<feature type="splice variant" id="VSP_006685" description="In isoform 2." evidence="7 8 9">
    <location>
        <begin position="21"/>
        <end position="45"/>
    </location>
</feature>
<feature type="sequence variant" id="VAR_052424" description="In dbSNP:rs3828054.">
    <original>Q</original>
    <variation>R</variation>
    <location>
        <position position="18"/>
    </location>
</feature>
<feature type="sequence variant" id="VAR_034574" description="In dbSNP:rs16833395.">
    <original>K</original>
    <variation>R</variation>
    <location>
        <position position="296"/>
    </location>
</feature>
<feature type="sequence conflict" description="In Ref. 3; BAB15615." evidence="10" ref="3">
    <original>Q</original>
    <variation>R</variation>
    <location>
        <position position="244"/>
    </location>
</feature>
<feature type="sequence conflict" description="In Ref. 3; BAB15615." evidence="10" ref="3">
    <original>K</original>
    <variation>T</variation>
    <location>
        <position position="329"/>
    </location>
</feature>
<organism>
    <name type="scientific">Homo sapiens</name>
    <name type="common">Human</name>
    <dbReference type="NCBI Taxonomy" id="9606"/>
    <lineage>
        <taxon>Eukaryota</taxon>
        <taxon>Metazoa</taxon>
        <taxon>Chordata</taxon>
        <taxon>Craniata</taxon>
        <taxon>Vertebrata</taxon>
        <taxon>Euteleostomi</taxon>
        <taxon>Mammalia</taxon>
        <taxon>Eutheria</taxon>
        <taxon>Euarchontoglires</taxon>
        <taxon>Primates</taxon>
        <taxon>Haplorrhini</taxon>
        <taxon>Catarrhini</taxon>
        <taxon>Hominidae</taxon>
        <taxon>Homo</taxon>
    </lineage>
</organism>
<keyword id="KW-0025">Alternative splicing</keyword>
<keyword id="KW-0091">Biomineralization</keyword>
<keyword id="KW-0175">Coiled coil</keyword>
<keyword id="KW-1007">Palmoplantar keratoderma</keyword>
<keyword id="KW-1267">Proteomics identification</keyword>
<keyword id="KW-1185">Reference proteome</keyword>
<keyword id="KW-0964">Secreted</keyword>
<name>TUFT1_HUMAN</name>